<keyword id="KW-0031">Aminopeptidase</keyword>
<keyword id="KW-0963">Cytoplasm</keyword>
<keyword id="KW-0378">Hydrolase</keyword>
<keyword id="KW-0464">Manganese</keyword>
<keyword id="KW-0479">Metal-binding</keyword>
<keyword id="KW-0645">Protease</keyword>
<keyword id="KW-1185">Reference proteome</keyword>
<name>AMPA_PARUW</name>
<feature type="chain" id="PRO_0000165774" description="Probable cytosol aminopeptidase">
    <location>
        <begin position="1"/>
        <end position="499"/>
    </location>
</feature>
<feature type="active site" evidence="1">
    <location>
        <position position="274"/>
    </location>
</feature>
<feature type="active site" evidence="1">
    <location>
        <position position="348"/>
    </location>
</feature>
<feature type="binding site" evidence="1">
    <location>
        <position position="262"/>
    </location>
    <ligand>
        <name>Mn(2+)</name>
        <dbReference type="ChEBI" id="CHEBI:29035"/>
        <label>2</label>
    </ligand>
</feature>
<feature type="binding site" evidence="1">
    <location>
        <position position="267"/>
    </location>
    <ligand>
        <name>Mn(2+)</name>
        <dbReference type="ChEBI" id="CHEBI:29035"/>
        <label>1</label>
    </ligand>
</feature>
<feature type="binding site" evidence="1">
    <location>
        <position position="267"/>
    </location>
    <ligand>
        <name>Mn(2+)</name>
        <dbReference type="ChEBI" id="CHEBI:29035"/>
        <label>2</label>
    </ligand>
</feature>
<feature type="binding site" evidence="1">
    <location>
        <position position="285"/>
    </location>
    <ligand>
        <name>Mn(2+)</name>
        <dbReference type="ChEBI" id="CHEBI:29035"/>
        <label>2</label>
    </ligand>
</feature>
<feature type="binding site" evidence="1">
    <location>
        <position position="344"/>
    </location>
    <ligand>
        <name>Mn(2+)</name>
        <dbReference type="ChEBI" id="CHEBI:29035"/>
        <label>1</label>
    </ligand>
</feature>
<feature type="binding site" evidence="1">
    <location>
        <position position="346"/>
    </location>
    <ligand>
        <name>Mn(2+)</name>
        <dbReference type="ChEBI" id="CHEBI:29035"/>
        <label>1</label>
    </ligand>
</feature>
<feature type="binding site" evidence="1">
    <location>
        <position position="346"/>
    </location>
    <ligand>
        <name>Mn(2+)</name>
        <dbReference type="ChEBI" id="CHEBI:29035"/>
        <label>2</label>
    </ligand>
</feature>
<organism>
    <name type="scientific">Protochlamydia amoebophila (strain UWE25)</name>
    <dbReference type="NCBI Taxonomy" id="264201"/>
    <lineage>
        <taxon>Bacteria</taxon>
        <taxon>Pseudomonadati</taxon>
        <taxon>Chlamydiota</taxon>
        <taxon>Chlamydiia</taxon>
        <taxon>Parachlamydiales</taxon>
        <taxon>Parachlamydiaceae</taxon>
        <taxon>Candidatus Protochlamydia</taxon>
    </lineage>
</organism>
<sequence length="499" mass="54776">MEFALTLHIEKRKKADVLVLPFWKGTSQPEAAIALHPLKLSLDSVFNTGDFKGKEGETLFLYVEGLVEMRVALLGLGEKNKVSTEALRKSYGCLAKACLGKKLKTLNILMPEFNKTEEDAFIKAITEGLLLPNYVYDRLKSKQEEDDEVTLLQKINFISSNKHVLALAEEVAAICDGVYYTRDLINGNADEITPQYLAKCAQGLSQEYPQIKTTVFDKKRLEKEQMGLLLAVNRGSNLDPTLIIMEYKGNPKSKDHTVIIGKGVTYDTGGLNIKPTGGIETMKCDMSGGAACFGTMLAACHLDLKVNLTAIIPATENSVDAASFKPGDVYRSYLGKTVEMTNSDAEGRLILADALAYASQNLKPSRLIDIATLTGAIEISLGSEASGLMSTDDQLAKSLIQAGENTHERLWRMPLYEGYQEKLKSDIADLKSWNGRSGSSCVAAMFLKNFVGKDIPWAHLDIAGTAYVTEPKKYMPKYASGVGVRLLVEFLKQLSMVKN</sequence>
<proteinExistence type="inferred from homology"/>
<dbReference type="EC" id="3.4.11.1" evidence="1"/>
<dbReference type="EC" id="3.4.11.10" evidence="1"/>
<dbReference type="EMBL" id="BX908798">
    <property type="protein sequence ID" value="CAF23827.1"/>
    <property type="molecule type" value="Genomic_DNA"/>
</dbReference>
<dbReference type="RefSeq" id="WP_011175653.1">
    <property type="nucleotide sequence ID" value="NC_005861.2"/>
</dbReference>
<dbReference type="SMR" id="Q6MC72"/>
<dbReference type="STRING" id="264201.pc1103"/>
<dbReference type="KEGG" id="pcu:PC_RS05325"/>
<dbReference type="eggNOG" id="COG0260">
    <property type="taxonomic scope" value="Bacteria"/>
</dbReference>
<dbReference type="HOGENOM" id="CLU_013734_2_2_0"/>
<dbReference type="OrthoDB" id="9809354at2"/>
<dbReference type="Proteomes" id="UP000000529">
    <property type="component" value="Chromosome"/>
</dbReference>
<dbReference type="GO" id="GO:0005737">
    <property type="term" value="C:cytoplasm"/>
    <property type="evidence" value="ECO:0007669"/>
    <property type="project" value="UniProtKB-SubCell"/>
</dbReference>
<dbReference type="GO" id="GO:0030145">
    <property type="term" value="F:manganese ion binding"/>
    <property type="evidence" value="ECO:0007669"/>
    <property type="project" value="UniProtKB-UniRule"/>
</dbReference>
<dbReference type="GO" id="GO:0070006">
    <property type="term" value="F:metalloaminopeptidase activity"/>
    <property type="evidence" value="ECO:0007669"/>
    <property type="project" value="InterPro"/>
</dbReference>
<dbReference type="GO" id="GO:0006508">
    <property type="term" value="P:proteolysis"/>
    <property type="evidence" value="ECO:0007669"/>
    <property type="project" value="UniProtKB-KW"/>
</dbReference>
<dbReference type="CDD" id="cd00433">
    <property type="entry name" value="Peptidase_M17"/>
    <property type="match status" value="1"/>
</dbReference>
<dbReference type="Gene3D" id="3.40.220.10">
    <property type="entry name" value="Leucine Aminopeptidase, subunit E, domain 1"/>
    <property type="match status" value="1"/>
</dbReference>
<dbReference type="Gene3D" id="3.40.630.10">
    <property type="entry name" value="Zn peptidases"/>
    <property type="match status" value="1"/>
</dbReference>
<dbReference type="HAMAP" id="MF_00181">
    <property type="entry name" value="Cytosol_peptidase_M17"/>
    <property type="match status" value="1"/>
</dbReference>
<dbReference type="InterPro" id="IPR011356">
    <property type="entry name" value="Leucine_aapep/pepB"/>
</dbReference>
<dbReference type="InterPro" id="IPR043472">
    <property type="entry name" value="Macro_dom-like"/>
</dbReference>
<dbReference type="InterPro" id="IPR000819">
    <property type="entry name" value="Peptidase_M17_C"/>
</dbReference>
<dbReference type="InterPro" id="IPR023042">
    <property type="entry name" value="Peptidase_M17_leu_NH2_pept"/>
</dbReference>
<dbReference type="InterPro" id="IPR008283">
    <property type="entry name" value="Peptidase_M17_N"/>
</dbReference>
<dbReference type="NCBIfam" id="NF002073">
    <property type="entry name" value="PRK00913.1-2"/>
    <property type="match status" value="1"/>
</dbReference>
<dbReference type="NCBIfam" id="NF002074">
    <property type="entry name" value="PRK00913.1-4"/>
    <property type="match status" value="1"/>
</dbReference>
<dbReference type="NCBIfam" id="NF002083">
    <property type="entry name" value="PRK00913.3-5"/>
    <property type="match status" value="1"/>
</dbReference>
<dbReference type="PANTHER" id="PTHR11963:SF23">
    <property type="entry name" value="CYTOSOL AMINOPEPTIDASE"/>
    <property type="match status" value="1"/>
</dbReference>
<dbReference type="PANTHER" id="PTHR11963">
    <property type="entry name" value="LEUCINE AMINOPEPTIDASE-RELATED"/>
    <property type="match status" value="1"/>
</dbReference>
<dbReference type="Pfam" id="PF00883">
    <property type="entry name" value="Peptidase_M17"/>
    <property type="match status" value="1"/>
</dbReference>
<dbReference type="Pfam" id="PF02789">
    <property type="entry name" value="Peptidase_M17_N"/>
    <property type="match status" value="1"/>
</dbReference>
<dbReference type="PRINTS" id="PR00481">
    <property type="entry name" value="LAMNOPPTDASE"/>
</dbReference>
<dbReference type="SUPFAM" id="SSF52949">
    <property type="entry name" value="Macro domain-like"/>
    <property type="match status" value="1"/>
</dbReference>
<dbReference type="SUPFAM" id="SSF53187">
    <property type="entry name" value="Zn-dependent exopeptidases"/>
    <property type="match status" value="1"/>
</dbReference>
<dbReference type="PROSITE" id="PS00631">
    <property type="entry name" value="CYTOSOL_AP"/>
    <property type="match status" value="1"/>
</dbReference>
<gene>
    <name evidence="1" type="primary">pepA</name>
    <name type="ordered locus">pc1103</name>
</gene>
<comment type="function">
    <text evidence="1">Presumably involved in the processing and regular turnover of intracellular proteins. Catalyzes the removal of unsubstituted N-terminal amino acids from various peptides.</text>
</comment>
<comment type="catalytic activity">
    <reaction evidence="1">
        <text>Release of an N-terminal amino acid, Xaa-|-Yaa-, in which Xaa is preferably Leu, but may be other amino acids including Pro although not Arg or Lys, and Yaa may be Pro. Amino acid amides and methyl esters are also readily hydrolyzed, but rates on arylamides are exceedingly low.</text>
        <dbReference type="EC" id="3.4.11.1"/>
    </reaction>
</comment>
<comment type="catalytic activity">
    <reaction evidence="1">
        <text>Release of an N-terminal amino acid, preferentially leucine, but not glutamic or aspartic acids.</text>
        <dbReference type="EC" id="3.4.11.10"/>
    </reaction>
</comment>
<comment type="cofactor">
    <cofactor evidence="1">
        <name>Mn(2+)</name>
        <dbReference type="ChEBI" id="CHEBI:29035"/>
    </cofactor>
    <text evidence="1">Binds 2 manganese ions per subunit.</text>
</comment>
<comment type="subcellular location">
    <subcellularLocation>
        <location evidence="1">Cytoplasm</location>
    </subcellularLocation>
</comment>
<comment type="similarity">
    <text evidence="1">Belongs to the peptidase M17 family.</text>
</comment>
<evidence type="ECO:0000255" key="1">
    <source>
        <dbReference type="HAMAP-Rule" id="MF_00181"/>
    </source>
</evidence>
<accession>Q6MC72</accession>
<reference key="1">
    <citation type="journal article" date="2004" name="Science">
        <title>Illuminating the evolutionary history of chlamydiae.</title>
        <authorList>
            <person name="Horn M."/>
            <person name="Collingro A."/>
            <person name="Schmitz-Esser S."/>
            <person name="Beier C.L."/>
            <person name="Purkhold U."/>
            <person name="Fartmann B."/>
            <person name="Brandt P."/>
            <person name="Nyakatura G.J."/>
            <person name="Droege M."/>
            <person name="Frishman D."/>
            <person name="Rattei T."/>
            <person name="Mewes H.-W."/>
            <person name="Wagner M."/>
        </authorList>
    </citation>
    <scope>NUCLEOTIDE SEQUENCE [LARGE SCALE GENOMIC DNA]</scope>
    <source>
        <strain>UWE25</strain>
    </source>
</reference>
<protein>
    <recommendedName>
        <fullName evidence="1">Probable cytosol aminopeptidase</fullName>
        <ecNumber evidence="1">3.4.11.1</ecNumber>
    </recommendedName>
    <alternativeName>
        <fullName evidence="1">Leucine aminopeptidase</fullName>
        <shortName evidence="1">LAP</shortName>
        <ecNumber evidence="1">3.4.11.10</ecNumber>
    </alternativeName>
    <alternativeName>
        <fullName evidence="1">Leucyl aminopeptidase</fullName>
    </alternativeName>
</protein>